<evidence type="ECO:0000250" key="1"/>
<evidence type="ECO:0000255" key="2">
    <source>
        <dbReference type="PROSITE-ProRule" id="PRU00508"/>
    </source>
</evidence>
<evidence type="ECO:0000256" key="3">
    <source>
        <dbReference type="SAM" id="MobiDB-lite"/>
    </source>
</evidence>
<evidence type="ECO:0000269" key="4">
    <source>
    </source>
</evidence>
<evidence type="ECO:0000269" key="5">
    <source>
    </source>
</evidence>
<evidence type="ECO:0000305" key="6"/>
<evidence type="ECO:0007744" key="7">
    <source>
    </source>
</evidence>
<evidence type="ECO:0007744" key="8">
    <source>
    </source>
</evidence>
<evidence type="ECO:0007744" key="9">
    <source>
    </source>
</evidence>
<keyword id="KW-0225">Disease variant</keyword>
<keyword id="KW-0991">Intellectual disability</keyword>
<keyword id="KW-1017">Isopeptide bond</keyword>
<keyword id="KW-0479">Metal-binding</keyword>
<keyword id="KW-0597">Phosphoprotein</keyword>
<keyword id="KW-1267">Proteomics identification</keyword>
<keyword id="KW-1185">Reference proteome</keyword>
<keyword id="KW-0808">Transferase</keyword>
<keyword id="KW-0832">Ubl conjugation</keyword>
<keyword id="KW-0833">Ubl conjugation pathway</keyword>
<keyword id="KW-0862">Zinc</keyword>
<keyword id="KW-0863">Zinc-finger</keyword>
<proteinExistence type="evidence at protein level"/>
<protein>
    <recommendedName>
        <fullName>Putative E3 ubiquitin-protein ligase UBR7</fullName>
        <ecNumber>2.3.2.27</ecNumber>
    </recommendedName>
    <alternativeName>
        <fullName>N-recognin-7</fullName>
    </alternativeName>
    <alternativeName>
        <fullName>RING-type E3 ubiquitin transferase UBR7</fullName>
    </alternativeName>
</protein>
<comment type="function">
    <text evidence="1">E3 ubiquitin-protein ligase which is a component of the N-end rule pathway. Recognizes and binds to proteins bearing specific N-terminal residues that are destabilizing according to the N-end rule, leading to their ubiquitination and subsequent degradation.</text>
</comment>
<comment type="catalytic activity">
    <reaction>
        <text>S-ubiquitinyl-[E2 ubiquitin-conjugating enzyme]-L-cysteine + [acceptor protein]-L-lysine = [E2 ubiquitin-conjugating enzyme]-L-cysteine + N(6)-ubiquitinyl-[acceptor protein]-L-lysine.</text>
        <dbReference type="EC" id="2.3.2.27"/>
    </reaction>
</comment>
<comment type="pathway">
    <text>Protein modification; protein ubiquitination.</text>
</comment>
<comment type="tissue specificity">
    <text evidence="4">Expressed in sperm (at protein level).</text>
</comment>
<comment type="disease" evidence="5">
    <disease id="DI-06051">
        <name>Li-Campeau syndrome</name>
        <acronym>LICAS</acronym>
        <description>An autosomal recessive neurodevelopmental disorder characterized by global developmental delay, intellectual disability, epilepsy, ptosis, hypothyroidism, and variable cardiac and genital anomalies. Additional features may include seizures, short stature, hypotonia, and brain imaging anomalies, such as cortical atrophy.</description>
        <dbReference type="MIM" id="619189"/>
    </disease>
    <text>The disease is caused by variants affecting the gene represented in this entry.</text>
</comment>
<comment type="sequence caution" evidence="6">
    <conflict type="erroneous initiation">
        <sequence resource="EMBL-CDS" id="AAH15046"/>
    </conflict>
</comment>
<comment type="sequence caution" evidence="6">
    <conflict type="erroneous initiation">
        <sequence resource="EMBL-CDS" id="AAH51819"/>
    </conflict>
</comment>
<comment type="sequence caution" evidence="6">
    <conflict type="erroneous initiation">
        <sequence resource="EMBL-CDS" id="BAA91639"/>
    </conflict>
</comment>
<organism>
    <name type="scientific">Homo sapiens</name>
    <name type="common">Human</name>
    <dbReference type="NCBI Taxonomy" id="9606"/>
    <lineage>
        <taxon>Eukaryota</taxon>
        <taxon>Metazoa</taxon>
        <taxon>Chordata</taxon>
        <taxon>Craniata</taxon>
        <taxon>Vertebrata</taxon>
        <taxon>Euteleostomi</taxon>
        <taxon>Mammalia</taxon>
        <taxon>Eutheria</taxon>
        <taxon>Euarchontoglires</taxon>
        <taxon>Primates</taxon>
        <taxon>Haplorrhini</taxon>
        <taxon>Catarrhini</taxon>
        <taxon>Hominidae</taxon>
        <taxon>Homo</taxon>
    </lineage>
</organism>
<sequence length="425" mass="47999">MAGAEGAAGRQSELEPVVSLVDVLEEDEELENEACAVLGGSDSEKCSYSQGSVKRQALYACSTCTPEGEEPAGICLACSYECHGSHKLFELYTKRNFRCDCGNSKFKNLECKLLPDKAKVNSGNKYNDNFFGLYCICKRPYPDPEDEIPDEMIQCVVCEDWFHGRHLGAIPPESGDFQEMVCQACMKRCSFLWAYAAQLAVTKISTEDDGLVRNIDGIGDQEVIKPENGEHQDSTLKEDVPEQGKDDVREVKVEQNSEPCAGSSSESDLQTVFKNESLNAESKSGCKLQELKAKQLIKKDTATYWPLNWRSKLCTCQDCMKMYGDLDVLFLTDEYDTVLAYENKGKIAQATDRSDPLMDTLSSMNRVQQVELICEYNDLKTELKDYLKRFADEGTVVKREDIQQFFEEFQSKKRRRVDGMQYYCS</sequence>
<dbReference type="EC" id="2.3.2.27"/>
<dbReference type="EMBL" id="AK001345">
    <property type="protein sequence ID" value="BAA91639.1"/>
    <property type="status" value="ALT_INIT"/>
    <property type="molecule type" value="mRNA"/>
</dbReference>
<dbReference type="EMBL" id="AK097477">
    <property type="protein sequence ID" value="BAC05069.1"/>
    <property type="molecule type" value="mRNA"/>
</dbReference>
<dbReference type="EMBL" id="BC015046">
    <property type="protein sequence ID" value="AAH15046.1"/>
    <property type="status" value="ALT_INIT"/>
    <property type="molecule type" value="mRNA"/>
</dbReference>
<dbReference type="EMBL" id="BC051819">
    <property type="protein sequence ID" value="AAH51819.4"/>
    <property type="status" value="ALT_INIT"/>
    <property type="molecule type" value="mRNA"/>
</dbReference>
<dbReference type="EMBL" id="BX248249">
    <property type="protein sequence ID" value="CAD62577.1"/>
    <property type="molecule type" value="mRNA"/>
</dbReference>
<dbReference type="CCDS" id="CCDS9909.1"/>
<dbReference type="RefSeq" id="NP_786924.2">
    <property type="nucleotide sequence ID" value="NM_175748.4"/>
</dbReference>
<dbReference type="BioGRID" id="120451">
    <property type="interactions" value="96"/>
</dbReference>
<dbReference type="FunCoup" id="Q8N806">
    <property type="interactions" value="3865"/>
</dbReference>
<dbReference type="IntAct" id="Q8N806">
    <property type="interactions" value="18"/>
</dbReference>
<dbReference type="MINT" id="Q8N806"/>
<dbReference type="STRING" id="9606.ENSP00000013070"/>
<dbReference type="GlyGen" id="Q8N806">
    <property type="glycosylation" value="1 site, 1 O-linked glycan (1 site)"/>
</dbReference>
<dbReference type="iPTMnet" id="Q8N806"/>
<dbReference type="PhosphoSitePlus" id="Q8N806"/>
<dbReference type="BioMuta" id="UBR7"/>
<dbReference type="DMDM" id="37999713"/>
<dbReference type="jPOST" id="Q8N806"/>
<dbReference type="MassIVE" id="Q8N806"/>
<dbReference type="PaxDb" id="9606-ENSP00000013070"/>
<dbReference type="PeptideAtlas" id="Q8N806"/>
<dbReference type="ProteomicsDB" id="72353"/>
<dbReference type="Pumba" id="Q8N806"/>
<dbReference type="Antibodypedia" id="29">
    <property type="antibodies" value="185 antibodies from 25 providers"/>
</dbReference>
<dbReference type="DNASU" id="55148"/>
<dbReference type="Ensembl" id="ENST00000013070.11">
    <property type="protein sequence ID" value="ENSP00000013070.6"/>
    <property type="gene ID" value="ENSG00000012963.15"/>
</dbReference>
<dbReference type="Ensembl" id="ENST00000619583.3">
    <property type="protein sequence ID" value="ENSP00000483908.1"/>
    <property type="gene ID" value="ENSG00000278787.4"/>
</dbReference>
<dbReference type="GeneID" id="55148"/>
<dbReference type="KEGG" id="hsa:55148"/>
<dbReference type="MANE-Select" id="ENST00000013070.11">
    <property type="protein sequence ID" value="ENSP00000013070.6"/>
    <property type="RefSeq nucleotide sequence ID" value="NM_175748.4"/>
    <property type="RefSeq protein sequence ID" value="NP_786924.2"/>
</dbReference>
<dbReference type="UCSC" id="uc001ybm.4">
    <property type="organism name" value="human"/>
</dbReference>
<dbReference type="AGR" id="HGNC:20344"/>
<dbReference type="CTD" id="55148"/>
<dbReference type="DisGeNET" id="55148"/>
<dbReference type="GeneCards" id="UBR7"/>
<dbReference type="HGNC" id="HGNC:20344">
    <property type="gene designation" value="UBR7"/>
</dbReference>
<dbReference type="HPA" id="ENSG00000012963">
    <property type="expression patterns" value="Low tissue specificity"/>
</dbReference>
<dbReference type="MalaCards" id="UBR7"/>
<dbReference type="MIM" id="613816">
    <property type="type" value="gene"/>
</dbReference>
<dbReference type="MIM" id="619189">
    <property type="type" value="phenotype"/>
</dbReference>
<dbReference type="neXtProt" id="NX_Q8N806"/>
<dbReference type="OpenTargets" id="ENSG00000012963"/>
<dbReference type="Orphanet" id="528084">
    <property type="disease" value="Non-specific syndromic intellectual disability"/>
</dbReference>
<dbReference type="PharmGKB" id="PA162408298"/>
<dbReference type="VEuPathDB" id="HostDB:ENSG00000012963"/>
<dbReference type="eggNOG" id="KOG2752">
    <property type="taxonomic scope" value="Eukaryota"/>
</dbReference>
<dbReference type="GeneTree" id="ENSGT00390000017610"/>
<dbReference type="HOGENOM" id="CLU_025221_0_0_1"/>
<dbReference type="InParanoid" id="Q8N806"/>
<dbReference type="OMA" id="GAMVYNH"/>
<dbReference type="OrthoDB" id="10262564at2759"/>
<dbReference type="PAN-GO" id="Q8N806">
    <property type="GO annotations" value="0 GO annotations based on evolutionary models"/>
</dbReference>
<dbReference type="PhylomeDB" id="Q8N806"/>
<dbReference type="TreeFam" id="TF105941"/>
<dbReference type="PathwayCommons" id="Q8N806"/>
<dbReference type="SignaLink" id="Q8N806"/>
<dbReference type="UniPathway" id="UPA00143"/>
<dbReference type="BioGRID-ORCS" id="55148">
    <property type="hits" value="13 hits in 1188 CRISPR screens"/>
</dbReference>
<dbReference type="ChiTaRS" id="UBR7">
    <property type="organism name" value="human"/>
</dbReference>
<dbReference type="GenomeRNAi" id="55148"/>
<dbReference type="Pharos" id="Q8N806">
    <property type="development level" value="Tbio"/>
</dbReference>
<dbReference type="PRO" id="PR:Q8N806"/>
<dbReference type="Proteomes" id="UP000005640">
    <property type="component" value="Chromosome 14"/>
</dbReference>
<dbReference type="RNAct" id="Q8N806">
    <property type="molecule type" value="protein"/>
</dbReference>
<dbReference type="Bgee" id="ENSG00000012963">
    <property type="expression patterns" value="Expressed in left testis and 107 other cell types or tissues"/>
</dbReference>
<dbReference type="ExpressionAtlas" id="Q8N806">
    <property type="expression patterns" value="baseline and differential"/>
</dbReference>
<dbReference type="GO" id="GO:0061630">
    <property type="term" value="F:ubiquitin protein ligase activity"/>
    <property type="evidence" value="ECO:0007669"/>
    <property type="project" value="InterPro"/>
</dbReference>
<dbReference type="GO" id="GO:0008270">
    <property type="term" value="F:zinc ion binding"/>
    <property type="evidence" value="ECO:0007669"/>
    <property type="project" value="UniProtKB-KW"/>
</dbReference>
<dbReference type="GO" id="GO:0043161">
    <property type="term" value="P:proteasome-mediated ubiquitin-dependent protein catabolic process"/>
    <property type="evidence" value="ECO:0007669"/>
    <property type="project" value="UniProtKB-ARBA"/>
</dbReference>
<dbReference type="GO" id="GO:0016567">
    <property type="term" value="P:protein ubiquitination"/>
    <property type="evidence" value="ECO:0007669"/>
    <property type="project" value="UniProtKB-UniPathway"/>
</dbReference>
<dbReference type="CDD" id="cd15542">
    <property type="entry name" value="PHD_UBR7"/>
    <property type="match status" value="1"/>
</dbReference>
<dbReference type="CDD" id="cd19677">
    <property type="entry name" value="UBR-box_UBR7"/>
    <property type="match status" value="1"/>
</dbReference>
<dbReference type="FunFam" id="3.30.40.10:FF:000183">
    <property type="entry name" value="putative E3 ubiquitin-protein ligase UBR7"/>
    <property type="match status" value="1"/>
</dbReference>
<dbReference type="Gene3D" id="3.30.40.10">
    <property type="entry name" value="Zinc/RING finger domain, C3HC4 (zinc finger)"/>
    <property type="match status" value="1"/>
</dbReference>
<dbReference type="InterPro" id="IPR040204">
    <property type="entry name" value="UBR7"/>
</dbReference>
<dbReference type="InterPro" id="IPR047506">
    <property type="entry name" value="UBR7-like_UBR-box"/>
</dbReference>
<dbReference type="InterPro" id="IPR011011">
    <property type="entry name" value="Znf_FYVE_PHD"/>
</dbReference>
<dbReference type="InterPro" id="IPR013083">
    <property type="entry name" value="Znf_RING/FYVE/PHD"/>
</dbReference>
<dbReference type="InterPro" id="IPR003126">
    <property type="entry name" value="Znf_UBR"/>
</dbReference>
<dbReference type="PANTHER" id="PTHR13513">
    <property type="entry name" value="E3 UBIQUITIN-PROTEIN LIGASE UBR7"/>
    <property type="match status" value="1"/>
</dbReference>
<dbReference type="PANTHER" id="PTHR13513:SF9">
    <property type="entry name" value="E3 UBIQUITIN-PROTEIN LIGASE UBR7-RELATED"/>
    <property type="match status" value="1"/>
</dbReference>
<dbReference type="Pfam" id="PF02207">
    <property type="entry name" value="zf-UBR"/>
    <property type="match status" value="1"/>
</dbReference>
<dbReference type="SMART" id="SM00396">
    <property type="entry name" value="ZnF_UBR1"/>
    <property type="match status" value="1"/>
</dbReference>
<dbReference type="SUPFAM" id="SSF57903">
    <property type="entry name" value="FYVE/PHD zinc finger"/>
    <property type="match status" value="1"/>
</dbReference>
<dbReference type="PROSITE" id="PS51157">
    <property type="entry name" value="ZF_UBR"/>
    <property type="match status" value="1"/>
</dbReference>
<name>UBR7_HUMAN</name>
<reference key="1">
    <citation type="journal article" date="2004" name="Nat. Genet.">
        <title>Complete sequencing and characterization of 21,243 full-length human cDNAs.</title>
        <authorList>
            <person name="Ota T."/>
            <person name="Suzuki Y."/>
            <person name="Nishikawa T."/>
            <person name="Otsuki T."/>
            <person name="Sugiyama T."/>
            <person name="Irie R."/>
            <person name="Wakamatsu A."/>
            <person name="Hayashi K."/>
            <person name="Sato H."/>
            <person name="Nagai K."/>
            <person name="Kimura K."/>
            <person name="Makita H."/>
            <person name="Sekine M."/>
            <person name="Obayashi M."/>
            <person name="Nishi T."/>
            <person name="Shibahara T."/>
            <person name="Tanaka T."/>
            <person name="Ishii S."/>
            <person name="Yamamoto J."/>
            <person name="Saito K."/>
            <person name="Kawai Y."/>
            <person name="Isono Y."/>
            <person name="Nakamura Y."/>
            <person name="Nagahari K."/>
            <person name="Murakami K."/>
            <person name="Yasuda T."/>
            <person name="Iwayanagi T."/>
            <person name="Wagatsuma M."/>
            <person name="Shiratori A."/>
            <person name="Sudo H."/>
            <person name="Hosoiri T."/>
            <person name="Kaku Y."/>
            <person name="Kodaira H."/>
            <person name="Kondo H."/>
            <person name="Sugawara M."/>
            <person name="Takahashi M."/>
            <person name="Kanda K."/>
            <person name="Yokoi T."/>
            <person name="Furuya T."/>
            <person name="Kikkawa E."/>
            <person name="Omura Y."/>
            <person name="Abe K."/>
            <person name="Kamihara K."/>
            <person name="Katsuta N."/>
            <person name="Sato K."/>
            <person name="Tanikawa M."/>
            <person name="Yamazaki M."/>
            <person name="Ninomiya K."/>
            <person name="Ishibashi T."/>
            <person name="Yamashita H."/>
            <person name="Murakawa K."/>
            <person name="Fujimori K."/>
            <person name="Tanai H."/>
            <person name="Kimata M."/>
            <person name="Watanabe M."/>
            <person name="Hiraoka S."/>
            <person name="Chiba Y."/>
            <person name="Ishida S."/>
            <person name="Ono Y."/>
            <person name="Takiguchi S."/>
            <person name="Watanabe S."/>
            <person name="Yosida M."/>
            <person name="Hotuta T."/>
            <person name="Kusano J."/>
            <person name="Kanehori K."/>
            <person name="Takahashi-Fujii A."/>
            <person name="Hara H."/>
            <person name="Tanase T.-O."/>
            <person name="Nomura Y."/>
            <person name="Togiya S."/>
            <person name="Komai F."/>
            <person name="Hara R."/>
            <person name="Takeuchi K."/>
            <person name="Arita M."/>
            <person name="Imose N."/>
            <person name="Musashino K."/>
            <person name="Yuuki H."/>
            <person name="Oshima A."/>
            <person name="Sasaki N."/>
            <person name="Aotsuka S."/>
            <person name="Yoshikawa Y."/>
            <person name="Matsunawa H."/>
            <person name="Ichihara T."/>
            <person name="Shiohata N."/>
            <person name="Sano S."/>
            <person name="Moriya S."/>
            <person name="Momiyama H."/>
            <person name="Satoh N."/>
            <person name="Takami S."/>
            <person name="Terashima Y."/>
            <person name="Suzuki O."/>
            <person name="Nakagawa S."/>
            <person name="Senoh A."/>
            <person name="Mizoguchi H."/>
            <person name="Goto Y."/>
            <person name="Shimizu F."/>
            <person name="Wakebe H."/>
            <person name="Hishigaki H."/>
            <person name="Watanabe T."/>
            <person name="Sugiyama A."/>
            <person name="Takemoto M."/>
            <person name="Kawakami B."/>
            <person name="Yamazaki M."/>
            <person name="Watanabe K."/>
            <person name="Kumagai A."/>
            <person name="Itakura S."/>
            <person name="Fukuzumi Y."/>
            <person name="Fujimori Y."/>
            <person name="Komiyama M."/>
            <person name="Tashiro H."/>
            <person name="Tanigami A."/>
            <person name="Fujiwara T."/>
            <person name="Ono T."/>
            <person name="Yamada K."/>
            <person name="Fujii Y."/>
            <person name="Ozaki K."/>
            <person name="Hirao M."/>
            <person name="Ohmori Y."/>
            <person name="Kawabata A."/>
            <person name="Hikiji T."/>
            <person name="Kobatake N."/>
            <person name="Inagaki H."/>
            <person name="Ikema Y."/>
            <person name="Okamoto S."/>
            <person name="Okitani R."/>
            <person name="Kawakami T."/>
            <person name="Noguchi S."/>
            <person name="Itoh T."/>
            <person name="Shigeta K."/>
            <person name="Senba T."/>
            <person name="Matsumura K."/>
            <person name="Nakajima Y."/>
            <person name="Mizuno T."/>
            <person name="Morinaga M."/>
            <person name="Sasaki M."/>
            <person name="Togashi T."/>
            <person name="Oyama M."/>
            <person name="Hata H."/>
            <person name="Watanabe M."/>
            <person name="Komatsu T."/>
            <person name="Mizushima-Sugano J."/>
            <person name="Satoh T."/>
            <person name="Shirai Y."/>
            <person name="Takahashi Y."/>
            <person name="Nakagawa K."/>
            <person name="Okumura K."/>
            <person name="Nagase T."/>
            <person name="Nomura N."/>
            <person name="Kikuchi H."/>
            <person name="Masuho Y."/>
            <person name="Yamashita R."/>
            <person name="Nakai K."/>
            <person name="Yada T."/>
            <person name="Nakamura Y."/>
            <person name="Ohara O."/>
            <person name="Isogai T."/>
            <person name="Sugano S."/>
        </authorList>
    </citation>
    <scope>NUCLEOTIDE SEQUENCE [LARGE SCALE MRNA]</scope>
    <source>
        <tissue>Teratocarcinoma</tissue>
        <tissue>Testis</tissue>
    </source>
</reference>
<reference key="2">
    <citation type="journal article" date="2004" name="Genome Res.">
        <title>The status, quality, and expansion of the NIH full-length cDNA project: the Mammalian Gene Collection (MGC).</title>
        <authorList>
            <consortium name="The MGC Project Team"/>
        </authorList>
    </citation>
    <scope>NUCLEOTIDE SEQUENCE [LARGE SCALE MRNA]</scope>
    <source>
        <tissue>Leiomyosarcoma</tissue>
        <tissue>Retinoblastoma</tissue>
    </source>
</reference>
<reference key="3">
    <citation type="submission" date="2003-02" db="EMBL/GenBank/DDBJ databases">
        <title>Full-length cDNA libraries and normalization.</title>
        <authorList>
            <person name="Li W.B."/>
            <person name="Gruber C."/>
            <person name="Jessee J."/>
            <person name="Polayes D."/>
        </authorList>
    </citation>
    <scope>NUCLEOTIDE SEQUENCE [LARGE SCALE MRNA] OF 3-425</scope>
    <source>
        <tissue>Neuroblastoma</tissue>
    </source>
</reference>
<reference key="4">
    <citation type="journal article" date="2011" name="BMC Syst. Biol.">
        <title>Initial characterization of the human central proteome.</title>
        <authorList>
            <person name="Burkard T.R."/>
            <person name="Planyavsky M."/>
            <person name="Kaupe I."/>
            <person name="Breitwieser F.P."/>
            <person name="Buerckstuemmer T."/>
            <person name="Bennett K.L."/>
            <person name="Superti-Furga G."/>
            <person name="Colinge J."/>
        </authorList>
    </citation>
    <scope>IDENTIFICATION BY MASS SPECTROMETRY [LARGE SCALE ANALYSIS]</scope>
</reference>
<reference key="5">
    <citation type="journal article" date="2013" name="J. Proteome Res.">
        <title>Toward a comprehensive characterization of a human cancer cell phosphoproteome.</title>
        <authorList>
            <person name="Zhou H."/>
            <person name="Di Palma S."/>
            <person name="Preisinger C."/>
            <person name="Peng M."/>
            <person name="Polat A.N."/>
            <person name="Heck A.J."/>
            <person name="Mohammed S."/>
        </authorList>
    </citation>
    <scope>PHOSPHORYLATION [LARGE SCALE ANALYSIS] AT SER-354</scope>
    <scope>IDENTIFICATION BY MASS SPECTROMETRY [LARGE SCALE ANALYSIS]</scope>
    <source>
        <tissue>Erythroleukemia</tissue>
    </source>
</reference>
<reference key="6">
    <citation type="journal article" date="2014" name="Cell Tissue Res.">
        <title>Identification and characterization of RING-finger ubiquitin ligase UBR7 in mammalian spermatozoa.</title>
        <authorList>
            <person name="Zimmerman S.W."/>
            <person name="Yi Y.J."/>
            <person name="Sutovsky M."/>
            <person name="van Leeuwen F.W."/>
            <person name="Conant G."/>
            <person name="Sutovsky P."/>
        </authorList>
    </citation>
    <scope>TISSUE SPECIFICITY</scope>
</reference>
<reference key="7">
    <citation type="journal article" date="2014" name="J. Proteomics">
        <title>An enzyme assisted RP-RPLC approach for in-depth analysis of human liver phosphoproteome.</title>
        <authorList>
            <person name="Bian Y."/>
            <person name="Song C."/>
            <person name="Cheng K."/>
            <person name="Dong M."/>
            <person name="Wang F."/>
            <person name="Huang J."/>
            <person name="Sun D."/>
            <person name="Wang L."/>
            <person name="Ye M."/>
            <person name="Zou H."/>
        </authorList>
    </citation>
    <scope>PHOSPHORYLATION [LARGE SCALE ANALYSIS] AT SER-264</scope>
    <scope>IDENTIFICATION BY MASS SPECTROMETRY [LARGE SCALE ANALYSIS]</scope>
    <source>
        <tissue>Liver</tissue>
    </source>
</reference>
<reference key="8">
    <citation type="journal article" date="2017" name="Nat. Struct. Mol. Biol.">
        <title>Site-specific mapping of the human SUMO proteome reveals co-modification with phosphorylation.</title>
        <authorList>
            <person name="Hendriks I.A."/>
            <person name="Lyon D."/>
            <person name="Young C."/>
            <person name="Jensen L.J."/>
            <person name="Vertegaal A.C."/>
            <person name="Nielsen M.L."/>
        </authorList>
    </citation>
    <scope>SUMOYLATION [LARGE SCALE ANALYSIS] AT LYS-225; LYS-252; LYS-274 AND LYS-398</scope>
    <scope>IDENTIFICATION BY MASS SPECTROMETRY [LARGE SCALE ANALYSIS]</scope>
</reference>
<reference key="9">
    <citation type="journal article" date="2021" name="Am. J. Hum. Genet.">
        <title>UBR7 functions with UBR5 in the Notch signaling pathway and is involved in a neurodevelopmental syndrome with epilepsy, ptosis, and hypothyroidism.</title>
        <authorList>
            <person name="Li C."/>
            <person name="Beauregard-Lacroix E."/>
            <person name="Kondratev C."/>
            <person name="Rousseau J."/>
            <person name="Heo A.J."/>
            <person name="Neas K."/>
            <person name="Graham B.H."/>
            <person name="Rosenfeld J.A."/>
            <person name="Bacino C.A."/>
            <person name="Wagner M."/>
            <person name="Wenzel M."/>
            <person name="Al Mutairi F."/>
            <person name="Al Deiab H."/>
            <person name="Gleeson J.G."/>
            <person name="Stanley V."/>
            <person name="Zaki M.S."/>
            <person name="Kwon Y.T."/>
            <person name="Leroux M.R."/>
            <person name="Campeau P.M."/>
        </authorList>
    </citation>
    <scope>INVOLVEMENT IN LICAS</scope>
    <scope>VARIANTS LICAS 13-GLU--SER-425 DEL AND SER-305</scope>
</reference>
<feature type="chain" id="PRO_0000089932" description="Putative E3 ubiquitin-protein ligase UBR7">
    <location>
        <begin position="1"/>
        <end position="425"/>
    </location>
</feature>
<feature type="zinc finger region" description="UBR-type" evidence="2">
    <location>
        <begin position="44"/>
        <end position="116"/>
    </location>
</feature>
<feature type="zinc finger region" description="PHD-type; atypical">
    <location>
        <begin position="132"/>
        <end position="188"/>
    </location>
</feature>
<feature type="region of interest" description="Disordered" evidence="3">
    <location>
        <begin position="225"/>
        <end position="246"/>
    </location>
</feature>
<feature type="modified residue" description="Phosphoserine" evidence="8">
    <location>
        <position position="264"/>
    </location>
</feature>
<feature type="modified residue" description="Phosphoserine" evidence="7">
    <location>
        <position position="354"/>
    </location>
</feature>
<feature type="cross-link" description="Glycyl lysine isopeptide (Lys-Gly) (interchain with G-Cter in SUMO2)" evidence="9">
    <location>
        <position position="225"/>
    </location>
</feature>
<feature type="cross-link" description="Glycyl lysine isopeptide (Lys-Gly) (interchain with G-Cter in SUMO2)" evidence="9">
    <location>
        <position position="252"/>
    </location>
</feature>
<feature type="cross-link" description="Glycyl lysine isopeptide (Lys-Gly) (interchain with G-Cter in SUMO2)" evidence="9">
    <location>
        <position position="274"/>
    </location>
</feature>
<feature type="cross-link" description="Glycyl lysine isopeptide (Lys-Gly) (interchain with G-Cter in SUMO2)" evidence="9">
    <location>
        <position position="398"/>
    </location>
</feature>
<feature type="sequence variant" id="VAR_085255" description="In LICAS; no UBR7 protein detected in patient cells." evidence="5">
    <location>
        <begin position="13"/>
        <end position="425"/>
    </location>
</feature>
<feature type="sequence variant" id="VAR_085256" description="In LICAS; uncertain significance." evidence="5">
    <original>W</original>
    <variation>S</variation>
    <location>
        <position position="305"/>
    </location>
</feature>
<feature type="sequence conflict" description="In Ref. 1; BAC05069." evidence="6" ref="1">
    <original>S</original>
    <variation>G</variation>
    <location>
        <position position="41"/>
    </location>
</feature>
<feature type="sequence conflict" description="In Ref. 1; BAA91639." evidence="6" ref="1">
    <original>I</original>
    <variation>T</variation>
    <location>
        <position position="170"/>
    </location>
</feature>
<feature type="sequence conflict" description="In Ref. 1; BAC05069." evidence="6" ref="1">
    <original>E</original>
    <variation>K</variation>
    <location>
        <position position="179"/>
    </location>
</feature>
<feature type="sequence conflict" description="In Ref. 1; BAC05069." evidence="6" ref="1">
    <original>K</original>
    <variation>R</variation>
    <location>
        <position position="344"/>
    </location>
</feature>
<gene>
    <name type="primary">UBR7</name>
    <name type="synonym">C14orf130</name>
</gene>
<accession>Q8N806</accession>
<accession>Q86U21</accession>
<accession>Q86UA9</accession>
<accession>Q96BY0</accession>
<accession>Q9NVV6</accession>